<protein>
    <recommendedName>
        <fullName evidence="1">Acetate kinase</fullName>
        <ecNumber evidence="1">2.7.2.1</ecNumber>
    </recommendedName>
    <alternativeName>
        <fullName evidence="1">Acetokinase</fullName>
    </alternativeName>
</protein>
<comment type="function">
    <text evidence="1">Catalyzes the formation of acetyl phosphate from acetate and ATP. Can also catalyze the reverse reaction.</text>
</comment>
<comment type="catalytic activity">
    <reaction evidence="1">
        <text>acetate + ATP = acetyl phosphate + ADP</text>
        <dbReference type="Rhea" id="RHEA:11352"/>
        <dbReference type="ChEBI" id="CHEBI:22191"/>
        <dbReference type="ChEBI" id="CHEBI:30089"/>
        <dbReference type="ChEBI" id="CHEBI:30616"/>
        <dbReference type="ChEBI" id="CHEBI:456216"/>
        <dbReference type="EC" id="2.7.2.1"/>
    </reaction>
</comment>
<comment type="cofactor">
    <cofactor evidence="1">
        <name>Mg(2+)</name>
        <dbReference type="ChEBI" id="CHEBI:18420"/>
    </cofactor>
    <cofactor evidence="1">
        <name>Mn(2+)</name>
        <dbReference type="ChEBI" id="CHEBI:29035"/>
    </cofactor>
    <text evidence="1">Mg(2+). Can also accept Mn(2+).</text>
</comment>
<comment type="pathway">
    <text evidence="1">Metabolic intermediate biosynthesis; acetyl-CoA biosynthesis; acetyl-CoA from acetate: step 1/2.</text>
</comment>
<comment type="subunit">
    <text evidence="1">Homodimer.</text>
</comment>
<comment type="subcellular location">
    <subcellularLocation>
        <location evidence="1">Cytoplasm</location>
    </subcellularLocation>
</comment>
<comment type="similarity">
    <text evidence="1">Belongs to the acetokinase family.</text>
</comment>
<dbReference type="EC" id="2.7.2.1" evidence="1"/>
<dbReference type="EMBL" id="CP001341">
    <property type="protein sequence ID" value="ACL41005.1"/>
    <property type="molecule type" value="Genomic_DNA"/>
</dbReference>
<dbReference type="RefSeq" id="WP_015938201.1">
    <property type="nucleotide sequence ID" value="NC_011886.1"/>
</dbReference>
<dbReference type="SMR" id="B8HF37"/>
<dbReference type="STRING" id="452863.Achl_3044"/>
<dbReference type="KEGG" id="ach:Achl_3044"/>
<dbReference type="eggNOG" id="COG0282">
    <property type="taxonomic scope" value="Bacteria"/>
</dbReference>
<dbReference type="HOGENOM" id="CLU_020352_0_1_11"/>
<dbReference type="OrthoDB" id="9802453at2"/>
<dbReference type="UniPathway" id="UPA00340">
    <property type="reaction ID" value="UER00458"/>
</dbReference>
<dbReference type="Proteomes" id="UP000002505">
    <property type="component" value="Chromosome"/>
</dbReference>
<dbReference type="GO" id="GO:0005737">
    <property type="term" value="C:cytoplasm"/>
    <property type="evidence" value="ECO:0007669"/>
    <property type="project" value="UniProtKB-SubCell"/>
</dbReference>
<dbReference type="GO" id="GO:0008776">
    <property type="term" value="F:acetate kinase activity"/>
    <property type="evidence" value="ECO:0007669"/>
    <property type="project" value="UniProtKB-UniRule"/>
</dbReference>
<dbReference type="GO" id="GO:0005524">
    <property type="term" value="F:ATP binding"/>
    <property type="evidence" value="ECO:0007669"/>
    <property type="project" value="UniProtKB-KW"/>
</dbReference>
<dbReference type="GO" id="GO:0000287">
    <property type="term" value="F:magnesium ion binding"/>
    <property type="evidence" value="ECO:0007669"/>
    <property type="project" value="UniProtKB-UniRule"/>
</dbReference>
<dbReference type="GO" id="GO:0006083">
    <property type="term" value="P:acetate metabolic process"/>
    <property type="evidence" value="ECO:0007669"/>
    <property type="project" value="TreeGrafter"/>
</dbReference>
<dbReference type="GO" id="GO:0006085">
    <property type="term" value="P:acetyl-CoA biosynthetic process"/>
    <property type="evidence" value="ECO:0007669"/>
    <property type="project" value="UniProtKB-UniRule"/>
</dbReference>
<dbReference type="CDD" id="cd24010">
    <property type="entry name" value="ASKHA_NBD_AcK_PK"/>
    <property type="match status" value="1"/>
</dbReference>
<dbReference type="Gene3D" id="3.30.420.40">
    <property type="match status" value="2"/>
</dbReference>
<dbReference type="HAMAP" id="MF_00020">
    <property type="entry name" value="Acetate_kinase"/>
    <property type="match status" value="1"/>
</dbReference>
<dbReference type="InterPro" id="IPR004372">
    <property type="entry name" value="Ac/propionate_kinase"/>
</dbReference>
<dbReference type="InterPro" id="IPR000890">
    <property type="entry name" value="Aliphatic_acid_kin_short-chain"/>
</dbReference>
<dbReference type="InterPro" id="IPR023865">
    <property type="entry name" value="Aliphatic_acid_kinase_CS"/>
</dbReference>
<dbReference type="InterPro" id="IPR043129">
    <property type="entry name" value="ATPase_NBD"/>
</dbReference>
<dbReference type="NCBIfam" id="TIGR00016">
    <property type="entry name" value="ackA"/>
    <property type="match status" value="1"/>
</dbReference>
<dbReference type="PANTHER" id="PTHR21060">
    <property type="entry name" value="ACETATE KINASE"/>
    <property type="match status" value="1"/>
</dbReference>
<dbReference type="PANTHER" id="PTHR21060:SF15">
    <property type="entry name" value="ACETATE KINASE-RELATED"/>
    <property type="match status" value="1"/>
</dbReference>
<dbReference type="Pfam" id="PF00871">
    <property type="entry name" value="Acetate_kinase"/>
    <property type="match status" value="1"/>
</dbReference>
<dbReference type="PIRSF" id="PIRSF000722">
    <property type="entry name" value="Acetate_prop_kin"/>
    <property type="match status" value="1"/>
</dbReference>
<dbReference type="PRINTS" id="PR00471">
    <property type="entry name" value="ACETATEKNASE"/>
</dbReference>
<dbReference type="SUPFAM" id="SSF53067">
    <property type="entry name" value="Actin-like ATPase domain"/>
    <property type="match status" value="2"/>
</dbReference>
<dbReference type="PROSITE" id="PS01075">
    <property type="entry name" value="ACETATE_KINASE_1"/>
    <property type="match status" value="1"/>
</dbReference>
<dbReference type="PROSITE" id="PS01076">
    <property type="entry name" value="ACETATE_KINASE_2"/>
    <property type="match status" value="1"/>
</dbReference>
<sequence length="386" mass="40814">MLVLVINSGSSSLKFQVRDVAAGTVLTEGLIEKIGMGNGGDGDGEIVGPRDHAEALEQVEAAIHEELGDLKLGAVGHRVVHGGERFGEPVLIDNEITRAIERLNPLAPLHNPANVLGIRAITRKWPDMPQVAVFDTAFHRTLPEHAWRYAVPDELYTNHGIRRYGFHGTSHEYVARRAAALLDLPVEEFDAVIAHLGNGASITAIQGGHSVDTSMGFTPLEGLVMGTRSGDLDPSILVFLGRAGWTPEDLDSMLNRESGLKGLAGNNDMRSVVEASEDGDAKAAMALAVTSYRLAKYIGGYHVAVGGAKALVFTAGIGENSHQFRALVADRLGALGVEVDAGLNAARSKEPRIISTPQSAIPVLVVPTDEERAIAEATAAVAGSGR</sequence>
<evidence type="ECO:0000255" key="1">
    <source>
        <dbReference type="HAMAP-Rule" id="MF_00020"/>
    </source>
</evidence>
<proteinExistence type="inferred from homology"/>
<feature type="chain" id="PRO_1000116792" description="Acetate kinase">
    <location>
        <begin position="1"/>
        <end position="386"/>
    </location>
</feature>
<feature type="active site" description="Proton donor/acceptor" evidence="1">
    <location>
        <position position="135"/>
    </location>
</feature>
<feature type="binding site" evidence="1">
    <location>
        <position position="7"/>
    </location>
    <ligand>
        <name>Mg(2+)</name>
        <dbReference type="ChEBI" id="CHEBI:18420"/>
    </ligand>
</feature>
<feature type="binding site" evidence="1">
    <location>
        <position position="14"/>
    </location>
    <ligand>
        <name>ATP</name>
        <dbReference type="ChEBI" id="CHEBI:30616"/>
    </ligand>
</feature>
<feature type="binding site" evidence="1">
    <location>
        <position position="78"/>
    </location>
    <ligand>
        <name>substrate</name>
    </ligand>
</feature>
<feature type="binding site" evidence="1">
    <location>
        <begin position="195"/>
        <end position="199"/>
    </location>
    <ligand>
        <name>ATP</name>
        <dbReference type="ChEBI" id="CHEBI:30616"/>
    </ligand>
</feature>
<feature type="binding site" evidence="1">
    <location>
        <begin position="268"/>
        <end position="270"/>
    </location>
    <ligand>
        <name>ATP</name>
        <dbReference type="ChEBI" id="CHEBI:30616"/>
    </ligand>
</feature>
<feature type="binding site" evidence="1">
    <location>
        <begin position="316"/>
        <end position="320"/>
    </location>
    <ligand>
        <name>ATP</name>
        <dbReference type="ChEBI" id="CHEBI:30616"/>
    </ligand>
</feature>
<feature type="binding site" evidence="1">
    <location>
        <position position="370"/>
    </location>
    <ligand>
        <name>Mg(2+)</name>
        <dbReference type="ChEBI" id="CHEBI:18420"/>
    </ligand>
</feature>
<feature type="site" description="Transition state stabilizer" evidence="1">
    <location>
        <position position="167"/>
    </location>
</feature>
<feature type="site" description="Transition state stabilizer" evidence="1">
    <location>
        <position position="228"/>
    </location>
</feature>
<name>ACKA_PSECP</name>
<organism>
    <name type="scientific">Pseudarthrobacter chlorophenolicus (strain ATCC 700700 / DSM 12829 / CIP 107037 / JCM 12360 / KCTC 9906 / NCIMB 13794 / A6)</name>
    <name type="common">Arthrobacter chlorophenolicus</name>
    <dbReference type="NCBI Taxonomy" id="452863"/>
    <lineage>
        <taxon>Bacteria</taxon>
        <taxon>Bacillati</taxon>
        <taxon>Actinomycetota</taxon>
        <taxon>Actinomycetes</taxon>
        <taxon>Micrococcales</taxon>
        <taxon>Micrococcaceae</taxon>
        <taxon>Pseudarthrobacter</taxon>
    </lineage>
</organism>
<accession>B8HF37</accession>
<keyword id="KW-0067">ATP-binding</keyword>
<keyword id="KW-0963">Cytoplasm</keyword>
<keyword id="KW-0418">Kinase</keyword>
<keyword id="KW-0460">Magnesium</keyword>
<keyword id="KW-0479">Metal-binding</keyword>
<keyword id="KW-0547">Nucleotide-binding</keyword>
<keyword id="KW-0808">Transferase</keyword>
<reference key="1">
    <citation type="submission" date="2009-01" db="EMBL/GenBank/DDBJ databases">
        <title>Complete sequence of chromosome of Arthrobacter chlorophenolicus A6.</title>
        <authorList>
            <consortium name="US DOE Joint Genome Institute"/>
            <person name="Lucas S."/>
            <person name="Copeland A."/>
            <person name="Lapidus A."/>
            <person name="Glavina del Rio T."/>
            <person name="Tice H."/>
            <person name="Bruce D."/>
            <person name="Goodwin L."/>
            <person name="Pitluck S."/>
            <person name="Goltsman E."/>
            <person name="Clum A."/>
            <person name="Larimer F."/>
            <person name="Land M."/>
            <person name="Hauser L."/>
            <person name="Kyrpides N."/>
            <person name="Mikhailova N."/>
            <person name="Jansson J."/>
            <person name="Richardson P."/>
        </authorList>
    </citation>
    <scope>NUCLEOTIDE SEQUENCE [LARGE SCALE GENOMIC DNA]</scope>
    <source>
        <strain>ATCC 700700 / DSM 12829 / CIP 107037 / JCM 12360 / KCTC 9906 / NCIMB 13794 / A6</strain>
    </source>
</reference>
<gene>
    <name evidence="1" type="primary">ackA</name>
    <name type="ordered locus">Achl_3044</name>
</gene>